<accession>A7FF15</accession>
<reference key="1">
    <citation type="journal article" date="2007" name="PLoS Genet.">
        <title>The complete genome sequence of Yersinia pseudotuberculosis IP31758, the causative agent of Far East scarlet-like fever.</title>
        <authorList>
            <person name="Eppinger M."/>
            <person name="Rosovitz M.J."/>
            <person name="Fricke W.F."/>
            <person name="Rasko D.A."/>
            <person name="Kokorina G."/>
            <person name="Fayolle C."/>
            <person name="Lindler L.E."/>
            <person name="Carniel E."/>
            <person name="Ravel J."/>
        </authorList>
    </citation>
    <scope>NUCLEOTIDE SEQUENCE [LARGE SCALE GENOMIC DNA]</scope>
    <source>
        <strain>IP 31758</strain>
    </source>
</reference>
<gene>
    <name type="ordered locus">YpsIP31758_0859</name>
</gene>
<feature type="chain" id="PRO_1000059833" description="UPF0149 protein YpsIP31758_0859">
    <location>
        <begin position="1"/>
        <end position="192"/>
    </location>
</feature>
<sequence length="192" mass="21131">MSIENTLPTYPSLALALSQQAVALTPAEMHGLISGMLCGGSKDNGWQTLVHDLTNEGVAFPQALSLPLQQLHEATQEALENEGFMFQLLIPEGEDVTVFDRADALSGWVNHFLLGLGMLQPKLAQVKDEVGEAIDDLRNIAQLGYDEDEDQEELAQSLEEVVEYVRVAAILCHIEFTQQKPTAPEMHKPTLH</sequence>
<proteinExistence type="inferred from homology"/>
<comment type="similarity">
    <text evidence="1">Belongs to the UPF0149 family.</text>
</comment>
<dbReference type="EMBL" id="CP000720">
    <property type="protein sequence ID" value="ABS46558.1"/>
    <property type="molecule type" value="Genomic_DNA"/>
</dbReference>
<dbReference type="RefSeq" id="WP_002209953.1">
    <property type="nucleotide sequence ID" value="NC_009708.1"/>
</dbReference>
<dbReference type="SMR" id="A7FF15"/>
<dbReference type="KEGG" id="ypi:YpsIP31758_0859"/>
<dbReference type="HOGENOM" id="CLU_085336_1_0_6"/>
<dbReference type="Proteomes" id="UP000002412">
    <property type="component" value="Chromosome"/>
</dbReference>
<dbReference type="GO" id="GO:0005829">
    <property type="term" value="C:cytosol"/>
    <property type="evidence" value="ECO:0007669"/>
    <property type="project" value="TreeGrafter"/>
</dbReference>
<dbReference type="FunFam" id="1.20.120.740:FF:000001">
    <property type="entry name" value="UPF0149 protein YgfB"/>
    <property type="match status" value="1"/>
</dbReference>
<dbReference type="Gene3D" id="1.20.120.740">
    <property type="entry name" value="YgfB uncharacterised protein family UPF0149, PF03695"/>
    <property type="match status" value="1"/>
</dbReference>
<dbReference type="HAMAP" id="MF_00346">
    <property type="entry name" value="UPF0149"/>
    <property type="match status" value="1"/>
</dbReference>
<dbReference type="InterPro" id="IPR011978">
    <property type="entry name" value="YgfB-like"/>
</dbReference>
<dbReference type="InterPro" id="IPR036255">
    <property type="entry name" value="YgfB-like_sf"/>
</dbReference>
<dbReference type="NCBIfam" id="NF002477">
    <property type="entry name" value="PRK01736.1"/>
    <property type="match status" value="1"/>
</dbReference>
<dbReference type="NCBIfam" id="TIGR02292">
    <property type="entry name" value="ygfB_yecA"/>
    <property type="match status" value="1"/>
</dbReference>
<dbReference type="PANTHER" id="PTHR37528">
    <property type="entry name" value="UPF0149 PROTEIN YGFB"/>
    <property type="match status" value="1"/>
</dbReference>
<dbReference type="PANTHER" id="PTHR37528:SF1">
    <property type="entry name" value="UPF0149 PROTEIN YGFB"/>
    <property type="match status" value="1"/>
</dbReference>
<dbReference type="Pfam" id="PF03695">
    <property type="entry name" value="UPF0149"/>
    <property type="match status" value="1"/>
</dbReference>
<dbReference type="SUPFAM" id="SSF101327">
    <property type="entry name" value="YgfB-like"/>
    <property type="match status" value="1"/>
</dbReference>
<protein>
    <recommendedName>
        <fullName evidence="1">UPF0149 protein YpsIP31758_0859</fullName>
    </recommendedName>
</protein>
<name>Y859_YERP3</name>
<organism>
    <name type="scientific">Yersinia pseudotuberculosis serotype O:1b (strain IP 31758)</name>
    <dbReference type="NCBI Taxonomy" id="349747"/>
    <lineage>
        <taxon>Bacteria</taxon>
        <taxon>Pseudomonadati</taxon>
        <taxon>Pseudomonadota</taxon>
        <taxon>Gammaproteobacteria</taxon>
        <taxon>Enterobacterales</taxon>
        <taxon>Yersiniaceae</taxon>
        <taxon>Yersinia</taxon>
    </lineage>
</organism>
<evidence type="ECO:0000255" key="1">
    <source>
        <dbReference type="HAMAP-Rule" id="MF_00346"/>
    </source>
</evidence>